<feature type="initiator methionine" description="Removed" evidence="1">
    <location>
        <position position="1"/>
    </location>
</feature>
<feature type="chain" id="PRO_0000282859" description="Prefoldin subunit 6">
    <location>
        <begin position="2"/>
        <end position="129"/>
    </location>
</feature>
<feature type="modified residue" description="N-acetylalanine" evidence="1">
    <location>
        <position position="2"/>
    </location>
</feature>
<feature type="modified residue" description="N6-acetyllysine" evidence="1">
    <location>
        <position position="21"/>
    </location>
</feature>
<feature type="modified residue" description="N6-acetyllysine; alternate" evidence="1">
    <location>
        <position position="66"/>
    </location>
</feature>
<feature type="cross-link" description="Glycyl lysine isopeptide (Lys-Gly) (interchain with G-Cter in SUMO1); alternate" evidence="1">
    <location>
        <position position="66"/>
    </location>
</feature>
<feature type="cross-link" description="Glycyl lysine isopeptide (Lys-Gly) (interchain with G-Cter in SUMO2); alternate" evidence="1">
    <location>
        <position position="66"/>
    </location>
</feature>
<protein>
    <recommendedName>
        <fullName>Prefoldin subunit 6</fullName>
    </recommendedName>
</protein>
<accession>Q17Q89</accession>
<organism>
    <name type="scientific">Bos taurus</name>
    <name type="common">Bovine</name>
    <dbReference type="NCBI Taxonomy" id="9913"/>
    <lineage>
        <taxon>Eukaryota</taxon>
        <taxon>Metazoa</taxon>
        <taxon>Chordata</taxon>
        <taxon>Craniata</taxon>
        <taxon>Vertebrata</taxon>
        <taxon>Euteleostomi</taxon>
        <taxon>Mammalia</taxon>
        <taxon>Eutheria</taxon>
        <taxon>Laurasiatheria</taxon>
        <taxon>Artiodactyla</taxon>
        <taxon>Ruminantia</taxon>
        <taxon>Pecora</taxon>
        <taxon>Bovidae</taxon>
        <taxon>Bovinae</taxon>
        <taxon>Bos</taxon>
    </lineage>
</organism>
<keyword id="KW-0007">Acetylation</keyword>
<keyword id="KW-0143">Chaperone</keyword>
<keyword id="KW-1017">Isopeptide bond</keyword>
<keyword id="KW-1185">Reference proteome</keyword>
<keyword id="KW-0832">Ubl conjugation</keyword>
<reference key="1">
    <citation type="submission" date="2006-06" db="EMBL/GenBank/DDBJ databases">
        <authorList>
            <consortium name="NIH - Mammalian Gene Collection (MGC) project"/>
        </authorList>
    </citation>
    <scope>NUCLEOTIDE SEQUENCE [LARGE SCALE MRNA]</scope>
    <source>
        <strain>Hereford</strain>
        <tissue>Fetal pons</tissue>
    </source>
</reference>
<name>PFD6_BOVIN</name>
<comment type="function">
    <text evidence="1">Binds specifically to cytosolic chaperonin (c-CPN) and transfers target proteins to it. Binds to nascent polypeptide chain and promotes folding in an environment in which there are many competing pathways for nonnative proteins.</text>
</comment>
<comment type="subunit">
    <text evidence="1 2">Heterohexamer of two PFD-alpha type and four PFD-beta type subunits (By similarity). Component of the PAQosome complex which is responsible for the biogenesis of several protein complexes and which consists of R2TP complex members RUVBL1, RUVBL2, RPAP3 and PIH1D1, URI complex members PFDN2, PFDN6, PDRG1, UXT and URI1 as well as ASDURF, POLR2E and DNAAF10/WDR92 (By similarity).</text>
</comment>
<comment type="similarity">
    <text evidence="3">Belongs to the prefoldin subunit beta family.</text>
</comment>
<evidence type="ECO:0000250" key="1">
    <source>
        <dbReference type="UniProtKB" id="O15212"/>
    </source>
</evidence>
<evidence type="ECO:0000250" key="2">
    <source>
        <dbReference type="UniProtKB" id="P52553"/>
    </source>
</evidence>
<evidence type="ECO:0000305" key="3"/>
<proteinExistence type="evidence at transcript level"/>
<dbReference type="EMBL" id="BC118486">
    <property type="protein sequence ID" value="AAI18487.1"/>
    <property type="molecule type" value="mRNA"/>
</dbReference>
<dbReference type="RefSeq" id="NP_001068889.1">
    <property type="nucleotide sequence ID" value="NM_001075421.2"/>
</dbReference>
<dbReference type="RefSeq" id="XP_005223280.1">
    <property type="nucleotide sequence ID" value="XM_005223223.5"/>
</dbReference>
<dbReference type="RefSeq" id="XP_005223281.1">
    <property type="nucleotide sequence ID" value="XM_005223224.5"/>
</dbReference>
<dbReference type="RefSeq" id="XP_010816333.1">
    <property type="nucleotide sequence ID" value="XM_010818031.4"/>
</dbReference>
<dbReference type="RefSeq" id="XP_059736266.1">
    <property type="nucleotide sequence ID" value="XM_059880283.1"/>
</dbReference>
<dbReference type="SMR" id="Q17Q89"/>
<dbReference type="FunCoup" id="Q17Q89">
    <property type="interactions" value="3340"/>
</dbReference>
<dbReference type="STRING" id="9913.ENSBTAP00000022382"/>
<dbReference type="PaxDb" id="9913-ENSBTAP00000022382"/>
<dbReference type="PeptideAtlas" id="Q17Q89"/>
<dbReference type="Ensembl" id="ENSBTAT00000022382.6">
    <property type="protein sequence ID" value="ENSBTAP00000022382.4"/>
    <property type="gene ID" value="ENSBTAG00000010723.7"/>
</dbReference>
<dbReference type="GeneID" id="509914"/>
<dbReference type="KEGG" id="bta:509914"/>
<dbReference type="CTD" id="10471"/>
<dbReference type="VEuPathDB" id="HostDB:ENSBTAG00000010723"/>
<dbReference type="VGNC" id="VGNC:32768">
    <property type="gene designation" value="PFDN6"/>
</dbReference>
<dbReference type="eggNOG" id="KOG3478">
    <property type="taxonomic scope" value="Eukaryota"/>
</dbReference>
<dbReference type="GeneTree" id="ENSGT00390000010512"/>
<dbReference type="HOGENOM" id="CLU_125172_0_1_1"/>
<dbReference type="InParanoid" id="Q17Q89"/>
<dbReference type="OMA" id="VQTEFAQ"/>
<dbReference type="OrthoDB" id="248120at2759"/>
<dbReference type="TreeFam" id="TF315166"/>
<dbReference type="Proteomes" id="UP000009136">
    <property type="component" value="Chromosome 23"/>
</dbReference>
<dbReference type="Bgee" id="ENSBTAG00000010723">
    <property type="expression patterns" value="Expressed in pons and 103 other cell types or tissues"/>
</dbReference>
<dbReference type="GO" id="GO:0005737">
    <property type="term" value="C:cytoplasm"/>
    <property type="evidence" value="ECO:0000318"/>
    <property type="project" value="GO_Central"/>
</dbReference>
<dbReference type="GO" id="GO:0005829">
    <property type="term" value="C:cytosol"/>
    <property type="evidence" value="ECO:0000304"/>
    <property type="project" value="Reactome"/>
</dbReference>
<dbReference type="GO" id="GO:0016272">
    <property type="term" value="C:prefoldin complex"/>
    <property type="evidence" value="ECO:0000318"/>
    <property type="project" value="GO_Central"/>
</dbReference>
<dbReference type="GO" id="GO:1990062">
    <property type="term" value="C:RPAP3/R2TP/prefoldin-like complex"/>
    <property type="evidence" value="ECO:0007669"/>
    <property type="project" value="Ensembl"/>
</dbReference>
<dbReference type="GO" id="GO:0001540">
    <property type="term" value="F:amyloid-beta binding"/>
    <property type="evidence" value="ECO:0007669"/>
    <property type="project" value="Ensembl"/>
</dbReference>
<dbReference type="GO" id="GO:0051087">
    <property type="term" value="F:protein-folding chaperone binding"/>
    <property type="evidence" value="ECO:0000318"/>
    <property type="project" value="GO_Central"/>
</dbReference>
<dbReference type="GO" id="GO:0051082">
    <property type="term" value="F:unfolded protein binding"/>
    <property type="evidence" value="ECO:0007669"/>
    <property type="project" value="Ensembl"/>
</dbReference>
<dbReference type="GO" id="GO:0051131">
    <property type="term" value="P:chaperone-mediated protein complex assembly"/>
    <property type="evidence" value="ECO:0000318"/>
    <property type="project" value="GO_Central"/>
</dbReference>
<dbReference type="GO" id="GO:1905907">
    <property type="term" value="P:negative regulation of amyloid fibril formation"/>
    <property type="evidence" value="ECO:0007669"/>
    <property type="project" value="Ensembl"/>
</dbReference>
<dbReference type="GO" id="GO:0006457">
    <property type="term" value="P:protein folding"/>
    <property type="evidence" value="ECO:0000318"/>
    <property type="project" value="GO_Central"/>
</dbReference>
<dbReference type="CDD" id="cd23161">
    <property type="entry name" value="Prefoldin_6"/>
    <property type="match status" value="1"/>
</dbReference>
<dbReference type="FunFam" id="1.10.287.370:FF:000003">
    <property type="entry name" value="Prefoldin subunit 6"/>
    <property type="match status" value="1"/>
</dbReference>
<dbReference type="Gene3D" id="1.10.287.370">
    <property type="match status" value="1"/>
</dbReference>
<dbReference type="InterPro" id="IPR002777">
    <property type="entry name" value="PFD_beta-like"/>
</dbReference>
<dbReference type="InterPro" id="IPR009053">
    <property type="entry name" value="Prefoldin"/>
</dbReference>
<dbReference type="PANTHER" id="PTHR21431">
    <property type="entry name" value="PREFOLDIN SUBUNIT 6"/>
    <property type="match status" value="1"/>
</dbReference>
<dbReference type="PANTHER" id="PTHR21431:SF0">
    <property type="entry name" value="PREFOLDIN SUBUNIT 6"/>
    <property type="match status" value="1"/>
</dbReference>
<dbReference type="Pfam" id="PF01920">
    <property type="entry name" value="Prefoldin_2"/>
    <property type="match status" value="1"/>
</dbReference>
<dbReference type="SUPFAM" id="SSF46579">
    <property type="entry name" value="Prefoldin"/>
    <property type="match status" value="1"/>
</dbReference>
<sequence length="129" mass="14555">MAELIQKKLQGEVEKYQQLQKDLSKSMSGRQKLEAQLTENNIVKEELALLDGSNVVFKLLGPVLVKQELGEARATVGKRLDYITAEIKRYESQLRDLEQQSEQQRETLAQLQQEFQRAQAAKAGAPGKA</sequence>
<gene>
    <name type="primary">PFDN6</name>
</gene>